<gene>
    <name type="primary">PGK</name>
</gene>
<dbReference type="EC" id="2.7.2.3" evidence="2"/>
<dbReference type="EMBL" id="AF001850">
    <property type="protein sequence ID" value="AAB58242.1"/>
    <property type="molecule type" value="Genomic_DNA"/>
</dbReference>
<dbReference type="SMR" id="O00852"/>
<dbReference type="UniPathway" id="UPA00109">
    <property type="reaction ID" value="UER00185"/>
</dbReference>
<dbReference type="GO" id="GO:0005829">
    <property type="term" value="C:cytosol"/>
    <property type="evidence" value="ECO:0007669"/>
    <property type="project" value="TreeGrafter"/>
</dbReference>
<dbReference type="GO" id="GO:0043531">
    <property type="term" value="F:ADP binding"/>
    <property type="evidence" value="ECO:0007669"/>
    <property type="project" value="TreeGrafter"/>
</dbReference>
<dbReference type="GO" id="GO:0005524">
    <property type="term" value="F:ATP binding"/>
    <property type="evidence" value="ECO:0007669"/>
    <property type="project" value="UniProtKB-KW"/>
</dbReference>
<dbReference type="GO" id="GO:0046872">
    <property type="term" value="F:metal ion binding"/>
    <property type="evidence" value="ECO:0007669"/>
    <property type="project" value="UniProtKB-KW"/>
</dbReference>
<dbReference type="GO" id="GO:0004618">
    <property type="term" value="F:phosphoglycerate kinase activity"/>
    <property type="evidence" value="ECO:0007669"/>
    <property type="project" value="UniProtKB-EC"/>
</dbReference>
<dbReference type="GO" id="GO:0006094">
    <property type="term" value="P:gluconeogenesis"/>
    <property type="evidence" value="ECO:0007669"/>
    <property type="project" value="TreeGrafter"/>
</dbReference>
<dbReference type="GO" id="GO:0006096">
    <property type="term" value="P:glycolytic process"/>
    <property type="evidence" value="ECO:0007669"/>
    <property type="project" value="UniProtKB-UniPathway"/>
</dbReference>
<dbReference type="CDD" id="cd00318">
    <property type="entry name" value="Phosphoglycerate_kinase"/>
    <property type="match status" value="1"/>
</dbReference>
<dbReference type="FunFam" id="3.40.50.1260:FF:000003">
    <property type="entry name" value="Phosphoglycerate kinase"/>
    <property type="match status" value="1"/>
</dbReference>
<dbReference type="Gene3D" id="3.40.50.1260">
    <property type="entry name" value="Phosphoglycerate kinase, N-terminal domain"/>
    <property type="match status" value="2"/>
</dbReference>
<dbReference type="InterPro" id="IPR001576">
    <property type="entry name" value="Phosphoglycerate_kinase"/>
</dbReference>
<dbReference type="InterPro" id="IPR015824">
    <property type="entry name" value="Phosphoglycerate_kinase_N"/>
</dbReference>
<dbReference type="InterPro" id="IPR036043">
    <property type="entry name" value="Phosphoglycerate_kinase_sf"/>
</dbReference>
<dbReference type="PANTHER" id="PTHR11406">
    <property type="entry name" value="PHOSPHOGLYCERATE KINASE"/>
    <property type="match status" value="1"/>
</dbReference>
<dbReference type="PANTHER" id="PTHR11406:SF0">
    <property type="entry name" value="PHOSPHOGLYCERATE KINASE"/>
    <property type="match status" value="1"/>
</dbReference>
<dbReference type="Pfam" id="PF00162">
    <property type="entry name" value="PGK"/>
    <property type="match status" value="1"/>
</dbReference>
<dbReference type="PIRSF" id="PIRSF000724">
    <property type="entry name" value="Pgk"/>
    <property type="match status" value="1"/>
</dbReference>
<dbReference type="PRINTS" id="PR00477">
    <property type="entry name" value="PHGLYCKINASE"/>
</dbReference>
<dbReference type="SUPFAM" id="SSF53748">
    <property type="entry name" value="Phosphoglycerate kinase"/>
    <property type="match status" value="1"/>
</dbReference>
<proteinExistence type="inferred from homology"/>
<name>PGK_GLACH</name>
<accession>O00852</accession>
<comment type="catalytic activity">
    <reaction evidence="2">
        <text>(2R)-3-phosphoglycerate + ATP = (2R)-3-phospho-glyceroyl phosphate + ADP</text>
        <dbReference type="Rhea" id="RHEA:14801"/>
        <dbReference type="ChEBI" id="CHEBI:30616"/>
        <dbReference type="ChEBI" id="CHEBI:57604"/>
        <dbReference type="ChEBI" id="CHEBI:58272"/>
        <dbReference type="ChEBI" id="CHEBI:456216"/>
        <dbReference type="EC" id="2.7.2.3"/>
    </reaction>
</comment>
<comment type="cofactor">
    <cofactor evidence="2">
        <name>Mg(2+)</name>
        <dbReference type="ChEBI" id="CHEBI:18420"/>
    </cofactor>
</comment>
<comment type="pathway">
    <text>Carbohydrate degradation; glycolysis; pyruvate from D-glyceraldehyde 3-phosphate: step 2/5.</text>
</comment>
<comment type="subunit">
    <text evidence="1">Monomer.</text>
</comment>
<comment type="similarity">
    <text evidence="4">Belongs to the phosphoglycerate kinase family.</text>
</comment>
<feature type="chain" id="PRO_0000145852" description="Phosphoglycerate kinase">
    <location>
        <begin position="1" status="less than"/>
        <end position="376" status="greater than"/>
    </location>
</feature>
<feature type="binding site" evidence="2">
    <location>
        <position position="1"/>
    </location>
    <ligand>
        <name>(2R)-3-phosphoglycerate</name>
        <dbReference type="ChEBI" id="CHEBI:58272"/>
    </ligand>
</feature>
<feature type="binding site" evidence="3">
    <location>
        <position position="2"/>
    </location>
    <ligand>
        <name>(2R)-3-phosphoglycerate</name>
        <dbReference type="ChEBI" id="CHEBI:58272"/>
    </ligand>
</feature>
<feature type="binding site" evidence="2">
    <location>
        <position position="3"/>
    </location>
    <ligand>
        <name>(2R)-3-phosphoglycerate</name>
        <dbReference type="ChEBI" id="CHEBI:58272"/>
    </ligand>
</feature>
<feature type="binding site" evidence="3">
    <location>
        <position position="4"/>
    </location>
    <ligand>
        <name>(2R)-3-phosphoglycerate</name>
        <dbReference type="ChEBI" id="CHEBI:58272"/>
    </ligand>
</feature>
<feature type="binding site" evidence="3">
    <location>
        <position position="17"/>
    </location>
    <ligand>
        <name>(2R)-3-phosphoglycerate</name>
        <dbReference type="ChEBI" id="CHEBI:58272"/>
    </ligand>
</feature>
<feature type="binding site" evidence="2">
    <location>
        <position position="40"/>
    </location>
    <ligand>
        <name>(2R)-3-phosphoglycerate</name>
        <dbReference type="ChEBI" id="CHEBI:58272"/>
    </ligand>
</feature>
<feature type="binding site" evidence="3">
    <location>
        <position position="41"/>
    </location>
    <ligand>
        <name>(2R)-3-phosphoglycerate</name>
        <dbReference type="ChEBI" id="CHEBI:58272"/>
    </ligand>
</feature>
<feature type="binding site" evidence="2">
    <location>
        <position position="43"/>
    </location>
    <ligand>
        <name>(2R)-3-phosphoglycerate</name>
        <dbReference type="ChEBI" id="CHEBI:58272"/>
    </ligand>
</feature>
<feature type="binding site" evidence="3">
    <location>
        <position position="44"/>
    </location>
    <ligand>
        <name>(2R)-3-phosphoglycerate</name>
        <dbReference type="ChEBI" id="CHEBI:58272"/>
    </ligand>
</feature>
<feature type="binding site" evidence="2">
    <location>
        <position position="99"/>
    </location>
    <ligand>
        <name>(2R)-3-phosphoglycerate</name>
        <dbReference type="ChEBI" id="CHEBI:58272"/>
    </ligand>
</feature>
<feature type="binding site" evidence="3">
    <location>
        <position position="100"/>
    </location>
    <ligand>
        <name>(2R)-3-phosphoglycerate</name>
        <dbReference type="ChEBI" id="CHEBI:58272"/>
    </ligand>
</feature>
<feature type="binding site" evidence="2">
    <location>
        <position position="147"/>
    </location>
    <ligand>
        <name>(2R)-3-phosphoglycerate</name>
        <dbReference type="ChEBI" id="CHEBI:58272"/>
    </ligand>
</feature>
<feature type="binding site" evidence="3">
    <location>
        <position position="148"/>
    </location>
    <ligand>
        <name>(2R)-3-phosphoglycerate</name>
        <dbReference type="ChEBI" id="CHEBI:58272"/>
    </ligand>
</feature>
<feature type="binding site" evidence="2">
    <location>
        <position position="191"/>
    </location>
    <ligand>
        <name>ADP</name>
        <dbReference type="ChEBI" id="CHEBI:456216"/>
    </ligand>
</feature>
<feature type="binding site" evidence="2">
    <location>
        <position position="191"/>
    </location>
    <ligand>
        <name>CDP</name>
        <dbReference type="ChEBI" id="CHEBI:58069"/>
    </ligand>
</feature>
<feature type="binding site" evidence="3">
    <location>
        <position position="192"/>
    </location>
    <ligand>
        <name>AMP</name>
        <dbReference type="ChEBI" id="CHEBI:456215"/>
    </ligand>
</feature>
<feature type="binding site" evidence="3">
    <location>
        <position position="192"/>
    </location>
    <ligand>
        <name>ATP</name>
        <dbReference type="ChEBI" id="CHEBI:30616"/>
    </ligand>
</feature>
<feature type="binding site" evidence="2">
    <location>
        <position position="192"/>
    </location>
    <ligand>
        <name>Mg(2+)</name>
        <dbReference type="ChEBI" id="CHEBI:18420"/>
    </ligand>
</feature>
<feature type="binding site" evidence="3">
    <location>
        <position position="193"/>
    </location>
    <ligand>
        <name>AMP</name>
        <dbReference type="ChEBI" id="CHEBI:456215"/>
    </ligand>
</feature>
<feature type="binding site" evidence="2">
    <location>
        <position position="196"/>
    </location>
    <ligand>
        <name>CDP</name>
        <dbReference type="ChEBI" id="CHEBI:58069"/>
    </ligand>
</feature>
<feature type="binding site" evidence="2">
    <location>
        <position position="196"/>
    </location>
    <ligand>
        <name>Mg(2+)</name>
        <dbReference type="ChEBI" id="CHEBI:18420"/>
    </ligand>
</feature>
<feature type="binding site" evidence="3">
    <location>
        <position position="197"/>
    </location>
    <ligand>
        <name>AMP</name>
        <dbReference type="ChEBI" id="CHEBI:456215"/>
    </ligand>
</feature>
<feature type="binding site" evidence="3">
    <location>
        <position position="197"/>
    </location>
    <ligand>
        <name>ATP</name>
        <dbReference type="ChEBI" id="CHEBI:30616"/>
    </ligand>
</feature>
<feature type="binding site" evidence="2">
    <location>
        <position position="215"/>
    </location>
    <ligand>
        <name>ADP</name>
        <dbReference type="ChEBI" id="CHEBI:456216"/>
    </ligand>
</feature>
<feature type="binding site" evidence="2">
    <location>
        <position position="215"/>
    </location>
    <ligand>
        <name>CDP</name>
        <dbReference type="ChEBI" id="CHEBI:58069"/>
    </ligand>
</feature>
<feature type="binding site" evidence="3">
    <location>
        <position position="216"/>
    </location>
    <ligand>
        <name>AMP</name>
        <dbReference type="ChEBI" id="CHEBI:456215"/>
    </ligand>
</feature>
<feature type="binding site" evidence="3">
    <location>
        <position position="216"/>
    </location>
    <ligand>
        <name>ATP</name>
        <dbReference type="ChEBI" id="CHEBI:30616"/>
    </ligand>
</feature>
<feature type="binding site" evidence="3">
    <location>
        <position position="290"/>
    </location>
    <ligand>
        <name>AMP</name>
        <dbReference type="ChEBI" id="CHEBI:456215"/>
    </ligand>
</feature>
<feature type="binding site" evidence="3">
    <location>
        <position position="290"/>
    </location>
    <ligand>
        <name>ATP</name>
        <dbReference type="ChEBI" id="CHEBI:30616"/>
    </ligand>
</feature>
<feature type="binding site" evidence="2">
    <location>
        <position position="315"/>
    </location>
    <ligand>
        <name>CDP</name>
        <dbReference type="ChEBI" id="CHEBI:58069"/>
    </ligand>
</feature>
<feature type="binding site" evidence="2">
    <location>
        <position position="320"/>
    </location>
    <ligand>
        <name>ADP</name>
        <dbReference type="ChEBI" id="CHEBI:456216"/>
    </ligand>
</feature>
<feature type="binding site" evidence="2">
    <location>
        <position position="320"/>
    </location>
    <ligand>
        <name>CDP</name>
        <dbReference type="ChEBI" id="CHEBI:58069"/>
    </ligand>
</feature>
<feature type="binding site" evidence="3">
    <location>
        <position position="321"/>
    </location>
    <ligand>
        <name>AMP</name>
        <dbReference type="ChEBI" id="CHEBI:456215"/>
    </ligand>
</feature>
<feature type="binding site" evidence="3">
    <location>
        <position position="321"/>
    </location>
    <ligand>
        <name>ATP</name>
        <dbReference type="ChEBI" id="CHEBI:30616"/>
    </ligand>
</feature>
<feature type="binding site" evidence="3">
    <location>
        <position position="352"/>
    </location>
    <ligand>
        <name>ATP</name>
        <dbReference type="ChEBI" id="CHEBI:30616"/>
    </ligand>
</feature>
<feature type="binding site" evidence="3">
    <location>
        <position position="352"/>
    </location>
    <ligand>
        <name>Mg(2+)</name>
        <dbReference type="ChEBI" id="CHEBI:18420"/>
    </ligand>
</feature>
<feature type="binding site" evidence="3">
    <location>
        <position position="353"/>
    </location>
    <ligand>
        <name>ATP</name>
        <dbReference type="ChEBI" id="CHEBI:30616"/>
    </ligand>
</feature>
<feature type="non-terminal residue">
    <location>
        <position position="1"/>
    </location>
</feature>
<feature type="non-terminal residue">
    <location>
        <position position="376"/>
    </location>
</feature>
<organism>
    <name type="scientific">Glaucoma chattoni</name>
    <dbReference type="NCBI Taxonomy" id="5883"/>
    <lineage>
        <taxon>Eukaryota</taxon>
        <taxon>Sar</taxon>
        <taxon>Alveolata</taxon>
        <taxon>Ciliophora</taxon>
        <taxon>Intramacronucleata</taxon>
        <taxon>Oligohymenophorea</taxon>
        <taxon>Hymenostomatida</taxon>
        <taxon>Tetrahymenina</taxon>
        <taxon>Glaucomidae</taxon>
        <taxon>Glaucoma</taxon>
    </lineage>
</organism>
<protein>
    <recommendedName>
        <fullName>Phosphoglycerate kinase</fullName>
        <ecNumber evidence="2">2.7.2.3</ecNumber>
    </recommendedName>
</protein>
<keyword id="KW-0067">ATP-binding</keyword>
<keyword id="KW-0324">Glycolysis</keyword>
<keyword id="KW-0418">Kinase</keyword>
<keyword id="KW-0460">Magnesium</keyword>
<keyword id="KW-0479">Metal-binding</keyword>
<keyword id="KW-0547">Nucleotide-binding</keyword>
<keyword id="KW-0808">Transferase</keyword>
<reference key="1">
    <citation type="submission" date="1997-05" db="EMBL/GenBank/DDBJ databases">
        <authorList>
            <person name="Pearlman R.E."/>
        </authorList>
    </citation>
    <scope>NUCLEOTIDE SEQUENCE [GENOMIC DNA]</scope>
</reference>
<sequence length="376" mass="40873">VDFNVPLKEGVVKDPTRIAGSIPSIKKILETNPRGLVLMSHLGRPDGQRVEKHSLKPVLPKLEELLGTKVTFLNDCVGKDVEEAVKSSRNGEIILLENLRFHIEEEGKAVDAAGNKVKADPKAVKEFRKSLTNLGDLFFNDAFGTAHRAHSSMVGVDHKIRVAGYLLKKELEYFSKALESPTLPFCVVLGGAKVKDKIQLINSMLDNVNEMIIGGGMAFTFLKRLHNLEIGNSLFDEEGYKIVDELLEKAKKKNVKIHLPVDFLCGDSLEANANTAIHDLQSGIPKGWIGLDAGPKTIALNAEVIARANTIVWNGPQGRFEVDKFRNGSSDLLKKVIERTKTGATSIIGGGDTVNLVQQEKASNKVSHVSTGGGAS</sequence>
<evidence type="ECO:0000250" key="1"/>
<evidence type="ECO:0000250" key="2">
    <source>
        <dbReference type="UniProtKB" id="P00558"/>
    </source>
</evidence>
<evidence type="ECO:0000250" key="3">
    <source>
        <dbReference type="UniProtKB" id="Q7SIB7"/>
    </source>
</evidence>
<evidence type="ECO:0000305" key="4"/>